<proteinExistence type="inferred from homology"/>
<gene>
    <name evidence="1" type="primary">mnmA</name>
    <name type="ordered locus">Exig_2078</name>
</gene>
<sequence>MNTRAKAPEETTVVVGMSGGVDSSVTAYLLKQQGYNVIGIFMKNWDDTDENGFCTATEDYEDVIAVANQIGIPYYAVNFEKEYWDKVFTYFLDEYKLGRTPNPDVMCNKEIKFKAFLDHAMRLGADFVATGHYARAVYEDGEHKLLRGVDTNKDQTYFLNQLSQDQIAKAMFPIGHMEKSEVRKIAEEANLATAKKKDSTGICFIGERNFKQFLSQYLPAQPGEMRTLDGKTMGRHDGLMYYTMGQRHGLGIGGDGEPWFVVGKNLQDNILFVEQGFHNELLYSEGLYASDISWTATMPAGTEFRCTAKFRYRQTDTPVTVRVLDGGRLDVAFDERQRAITPGQAVVFYDGDVCLGGATIDDAYKAGQALTYLA</sequence>
<evidence type="ECO:0000255" key="1">
    <source>
        <dbReference type="HAMAP-Rule" id="MF_00144"/>
    </source>
</evidence>
<protein>
    <recommendedName>
        <fullName evidence="1">tRNA-specific 2-thiouridylase MnmA</fullName>
        <ecNumber evidence="1">2.8.1.13</ecNumber>
    </recommendedName>
</protein>
<name>MNMA_EXIS2</name>
<organism>
    <name type="scientific">Exiguobacterium sibiricum (strain DSM 17290 / CCUG 55495 / CIP 109462 / JCM 13490 / 255-15)</name>
    <dbReference type="NCBI Taxonomy" id="262543"/>
    <lineage>
        <taxon>Bacteria</taxon>
        <taxon>Bacillati</taxon>
        <taxon>Bacillota</taxon>
        <taxon>Bacilli</taxon>
        <taxon>Bacillales</taxon>
        <taxon>Bacillales Family XII. Incertae Sedis</taxon>
        <taxon>Exiguobacterium</taxon>
    </lineage>
</organism>
<comment type="function">
    <text evidence="1">Catalyzes the 2-thiolation of uridine at the wobble position (U34) of tRNA, leading to the formation of s(2)U34.</text>
</comment>
<comment type="catalytic activity">
    <reaction evidence="1">
        <text>S-sulfanyl-L-cysteinyl-[protein] + uridine(34) in tRNA + AH2 + ATP = 2-thiouridine(34) in tRNA + L-cysteinyl-[protein] + A + AMP + diphosphate + H(+)</text>
        <dbReference type="Rhea" id="RHEA:47032"/>
        <dbReference type="Rhea" id="RHEA-COMP:10131"/>
        <dbReference type="Rhea" id="RHEA-COMP:11726"/>
        <dbReference type="Rhea" id="RHEA-COMP:11727"/>
        <dbReference type="Rhea" id="RHEA-COMP:11728"/>
        <dbReference type="ChEBI" id="CHEBI:13193"/>
        <dbReference type="ChEBI" id="CHEBI:15378"/>
        <dbReference type="ChEBI" id="CHEBI:17499"/>
        <dbReference type="ChEBI" id="CHEBI:29950"/>
        <dbReference type="ChEBI" id="CHEBI:30616"/>
        <dbReference type="ChEBI" id="CHEBI:33019"/>
        <dbReference type="ChEBI" id="CHEBI:61963"/>
        <dbReference type="ChEBI" id="CHEBI:65315"/>
        <dbReference type="ChEBI" id="CHEBI:87170"/>
        <dbReference type="ChEBI" id="CHEBI:456215"/>
        <dbReference type="EC" id="2.8.1.13"/>
    </reaction>
</comment>
<comment type="subcellular location">
    <subcellularLocation>
        <location evidence="1">Cytoplasm</location>
    </subcellularLocation>
</comment>
<comment type="similarity">
    <text evidence="1">Belongs to the MnmA/TRMU family.</text>
</comment>
<reference key="1">
    <citation type="submission" date="2008-04" db="EMBL/GenBank/DDBJ databases">
        <title>Complete sequence of chromosome of Exiguobacterium sibiricum 255-15.</title>
        <authorList>
            <consortium name="US DOE Joint Genome Institute"/>
            <person name="Copeland A."/>
            <person name="Lucas S."/>
            <person name="Lapidus A."/>
            <person name="Glavina del Rio T."/>
            <person name="Dalin E."/>
            <person name="Tice H."/>
            <person name="Bruce D."/>
            <person name="Goodwin L."/>
            <person name="Pitluck S."/>
            <person name="Kiss H."/>
            <person name="Chertkov O."/>
            <person name="Monk C."/>
            <person name="Brettin T."/>
            <person name="Detter J.C."/>
            <person name="Han C."/>
            <person name="Kuske C.R."/>
            <person name="Schmutz J."/>
            <person name="Larimer F."/>
            <person name="Land M."/>
            <person name="Hauser L."/>
            <person name="Kyrpides N."/>
            <person name="Mikhailova N."/>
            <person name="Vishnivetskaya T."/>
            <person name="Rodrigues D.F."/>
            <person name="Gilichinsky D."/>
            <person name="Tiedje J."/>
            <person name="Richardson P."/>
        </authorList>
    </citation>
    <scope>NUCLEOTIDE SEQUENCE [LARGE SCALE GENOMIC DNA]</scope>
    <source>
        <strain>DSM 17290 / CCUG 55495 / CIP 109462 / JCM 13490 / 255-15</strain>
    </source>
</reference>
<keyword id="KW-0067">ATP-binding</keyword>
<keyword id="KW-0963">Cytoplasm</keyword>
<keyword id="KW-1015">Disulfide bond</keyword>
<keyword id="KW-0547">Nucleotide-binding</keyword>
<keyword id="KW-1185">Reference proteome</keyword>
<keyword id="KW-0694">RNA-binding</keyword>
<keyword id="KW-0808">Transferase</keyword>
<keyword id="KW-0819">tRNA processing</keyword>
<keyword id="KW-0820">tRNA-binding</keyword>
<accession>B1YJE9</accession>
<feature type="chain" id="PRO_0000349634" description="tRNA-specific 2-thiouridylase MnmA">
    <location>
        <begin position="1"/>
        <end position="374"/>
    </location>
</feature>
<feature type="region of interest" description="Interaction with target base in tRNA" evidence="1">
    <location>
        <begin position="102"/>
        <end position="104"/>
    </location>
</feature>
<feature type="region of interest" description="Interaction with tRNA" evidence="1">
    <location>
        <begin position="153"/>
        <end position="155"/>
    </location>
</feature>
<feature type="region of interest" description="Interaction with tRNA" evidence="1">
    <location>
        <begin position="311"/>
        <end position="312"/>
    </location>
</feature>
<feature type="active site" description="Nucleophile" evidence="1">
    <location>
        <position position="107"/>
    </location>
</feature>
<feature type="active site" description="Cysteine persulfide intermediate" evidence="1">
    <location>
        <position position="203"/>
    </location>
</feature>
<feature type="binding site" evidence="1">
    <location>
        <begin position="16"/>
        <end position="23"/>
    </location>
    <ligand>
        <name>ATP</name>
        <dbReference type="ChEBI" id="CHEBI:30616"/>
    </ligand>
</feature>
<feature type="binding site" evidence="1">
    <location>
        <position position="42"/>
    </location>
    <ligand>
        <name>ATP</name>
        <dbReference type="ChEBI" id="CHEBI:30616"/>
    </ligand>
</feature>
<feature type="binding site" evidence="1">
    <location>
        <position position="131"/>
    </location>
    <ligand>
        <name>ATP</name>
        <dbReference type="ChEBI" id="CHEBI:30616"/>
    </ligand>
</feature>
<feature type="site" description="Interaction with tRNA" evidence="1">
    <location>
        <position position="132"/>
    </location>
</feature>
<feature type="site" description="Interaction with tRNA" evidence="1">
    <location>
        <position position="344"/>
    </location>
</feature>
<feature type="disulfide bond" description="Alternate" evidence="1">
    <location>
        <begin position="107"/>
        <end position="203"/>
    </location>
</feature>
<dbReference type="EC" id="2.8.1.13" evidence="1"/>
<dbReference type="EMBL" id="CP001022">
    <property type="protein sequence ID" value="ACB61530.1"/>
    <property type="molecule type" value="Genomic_DNA"/>
</dbReference>
<dbReference type="RefSeq" id="WP_012370947.1">
    <property type="nucleotide sequence ID" value="NC_010556.1"/>
</dbReference>
<dbReference type="SMR" id="B1YJE9"/>
<dbReference type="STRING" id="262543.Exig_2078"/>
<dbReference type="KEGG" id="esi:Exig_2078"/>
<dbReference type="eggNOG" id="COG0482">
    <property type="taxonomic scope" value="Bacteria"/>
</dbReference>
<dbReference type="HOGENOM" id="CLU_035188_1_0_9"/>
<dbReference type="OrthoDB" id="9800696at2"/>
<dbReference type="Proteomes" id="UP000001681">
    <property type="component" value="Chromosome"/>
</dbReference>
<dbReference type="GO" id="GO:0005737">
    <property type="term" value="C:cytoplasm"/>
    <property type="evidence" value="ECO:0007669"/>
    <property type="project" value="UniProtKB-SubCell"/>
</dbReference>
<dbReference type="GO" id="GO:0005524">
    <property type="term" value="F:ATP binding"/>
    <property type="evidence" value="ECO:0007669"/>
    <property type="project" value="UniProtKB-KW"/>
</dbReference>
<dbReference type="GO" id="GO:0000049">
    <property type="term" value="F:tRNA binding"/>
    <property type="evidence" value="ECO:0007669"/>
    <property type="project" value="UniProtKB-KW"/>
</dbReference>
<dbReference type="GO" id="GO:0103016">
    <property type="term" value="F:tRNA-uridine 2-sulfurtransferase activity"/>
    <property type="evidence" value="ECO:0007669"/>
    <property type="project" value="UniProtKB-EC"/>
</dbReference>
<dbReference type="GO" id="GO:0002143">
    <property type="term" value="P:tRNA wobble position uridine thiolation"/>
    <property type="evidence" value="ECO:0007669"/>
    <property type="project" value="TreeGrafter"/>
</dbReference>
<dbReference type="CDD" id="cd01998">
    <property type="entry name" value="MnmA_TRMU-like"/>
    <property type="match status" value="1"/>
</dbReference>
<dbReference type="FunFam" id="2.30.30.280:FF:000001">
    <property type="entry name" value="tRNA-specific 2-thiouridylase MnmA"/>
    <property type="match status" value="1"/>
</dbReference>
<dbReference type="FunFam" id="2.40.30.10:FF:000023">
    <property type="entry name" value="tRNA-specific 2-thiouridylase MnmA"/>
    <property type="match status" value="1"/>
</dbReference>
<dbReference type="FunFam" id="3.40.50.620:FF:000004">
    <property type="entry name" value="tRNA-specific 2-thiouridylase MnmA"/>
    <property type="match status" value="1"/>
</dbReference>
<dbReference type="Gene3D" id="2.30.30.280">
    <property type="entry name" value="Adenine nucleotide alpha hydrolases-like domains"/>
    <property type="match status" value="1"/>
</dbReference>
<dbReference type="Gene3D" id="3.40.50.620">
    <property type="entry name" value="HUPs"/>
    <property type="match status" value="1"/>
</dbReference>
<dbReference type="Gene3D" id="2.40.30.10">
    <property type="entry name" value="Translation factors"/>
    <property type="match status" value="1"/>
</dbReference>
<dbReference type="HAMAP" id="MF_00144">
    <property type="entry name" value="tRNA_thiouridyl_MnmA"/>
    <property type="match status" value="1"/>
</dbReference>
<dbReference type="InterPro" id="IPR004506">
    <property type="entry name" value="MnmA-like"/>
</dbReference>
<dbReference type="InterPro" id="IPR046885">
    <property type="entry name" value="MnmA-like_C"/>
</dbReference>
<dbReference type="InterPro" id="IPR046884">
    <property type="entry name" value="MnmA-like_central"/>
</dbReference>
<dbReference type="InterPro" id="IPR023382">
    <property type="entry name" value="MnmA-like_central_sf"/>
</dbReference>
<dbReference type="InterPro" id="IPR014729">
    <property type="entry name" value="Rossmann-like_a/b/a_fold"/>
</dbReference>
<dbReference type="NCBIfam" id="NF001138">
    <property type="entry name" value="PRK00143.1"/>
    <property type="match status" value="1"/>
</dbReference>
<dbReference type="NCBIfam" id="TIGR00420">
    <property type="entry name" value="trmU"/>
    <property type="match status" value="1"/>
</dbReference>
<dbReference type="PANTHER" id="PTHR11933:SF5">
    <property type="entry name" value="MITOCHONDRIAL TRNA-SPECIFIC 2-THIOURIDYLASE 1"/>
    <property type="match status" value="1"/>
</dbReference>
<dbReference type="PANTHER" id="PTHR11933">
    <property type="entry name" value="TRNA 5-METHYLAMINOMETHYL-2-THIOURIDYLATE -METHYLTRANSFERASE"/>
    <property type="match status" value="1"/>
</dbReference>
<dbReference type="Pfam" id="PF03054">
    <property type="entry name" value="tRNA_Me_trans"/>
    <property type="match status" value="1"/>
</dbReference>
<dbReference type="Pfam" id="PF20258">
    <property type="entry name" value="tRNA_Me_trans_C"/>
    <property type="match status" value="1"/>
</dbReference>
<dbReference type="Pfam" id="PF20259">
    <property type="entry name" value="tRNA_Me_trans_M"/>
    <property type="match status" value="1"/>
</dbReference>
<dbReference type="SUPFAM" id="SSF52402">
    <property type="entry name" value="Adenine nucleotide alpha hydrolases-like"/>
    <property type="match status" value="1"/>
</dbReference>